<gene>
    <name type="primary">C11orf52</name>
</gene>
<reference key="1">
    <citation type="journal article" date="2004" name="Nat. Genet.">
        <title>Complete sequencing and characterization of 21,243 full-length human cDNAs.</title>
        <authorList>
            <person name="Ota T."/>
            <person name="Suzuki Y."/>
            <person name="Nishikawa T."/>
            <person name="Otsuki T."/>
            <person name="Sugiyama T."/>
            <person name="Irie R."/>
            <person name="Wakamatsu A."/>
            <person name="Hayashi K."/>
            <person name="Sato H."/>
            <person name="Nagai K."/>
            <person name="Kimura K."/>
            <person name="Makita H."/>
            <person name="Sekine M."/>
            <person name="Obayashi M."/>
            <person name="Nishi T."/>
            <person name="Shibahara T."/>
            <person name="Tanaka T."/>
            <person name="Ishii S."/>
            <person name="Yamamoto J."/>
            <person name="Saito K."/>
            <person name="Kawai Y."/>
            <person name="Isono Y."/>
            <person name="Nakamura Y."/>
            <person name="Nagahari K."/>
            <person name="Murakami K."/>
            <person name="Yasuda T."/>
            <person name="Iwayanagi T."/>
            <person name="Wagatsuma M."/>
            <person name="Shiratori A."/>
            <person name="Sudo H."/>
            <person name="Hosoiri T."/>
            <person name="Kaku Y."/>
            <person name="Kodaira H."/>
            <person name="Kondo H."/>
            <person name="Sugawara M."/>
            <person name="Takahashi M."/>
            <person name="Kanda K."/>
            <person name="Yokoi T."/>
            <person name="Furuya T."/>
            <person name="Kikkawa E."/>
            <person name="Omura Y."/>
            <person name="Abe K."/>
            <person name="Kamihara K."/>
            <person name="Katsuta N."/>
            <person name="Sato K."/>
            <person name="Tanikawa M."/>
            <person name="Yamazaki M."/>
            <person name="Ninomiya K."/>
            <person name="Ishibashi T."/>
            <person name="Yamashita H."/>
            <person name="Murakawa K."/>
            <person name="Fujimori K."/>
            <person name="Tanai H."/>
            <person name="Kimata M."/>
            <person name="Watanabe M."/>
            <person name="Hiraoka S."/>
            <person name="Chiba Y."/>
            <person name="Ishida S."/>
            <person name="Ono Y."/>
            <person name="Takiguchi S."/>
            <person name="Watanabe S."/>
            <person name="Yosida M."/>
            <person name="Hotuta T."/>
            <person name="Kusano J."/>
            <person name="Kanehori K."/>
            <person name="Takahashi-Fujii A."/>
            <person name="Hara H."/>
            <person name="Tanase T.-O."/>
            <person name="Nomura Y."/>
            <person name="Togiya S."/>
            <person name="Komai F."/>
            <person name="Hara R."/>
            <person name="Takeuchi K."/>
            <person name="Arita M."/>
            <person name="Imose N."/>
            <person name="Musashino K."/>
            <person name="Yuuki H."/>
            <person name="Oshima A."/>
            <person name="Sasaki N."/>
            <person name="Aotsuka S."/>
            <person name="Yoshikawa Y."/>
            <person name="Matsunawa H."/>
            <person name="Ichihara T."/>
            <person name="Shiohata N."/>
            <person name="Sano S."/>
            <person name="Moriya S."/>
            <person name="Momiyama H."/>
            <person name="Satoh N."/>
            <person name="Takami S."/>
            <person name="Terashima Y."/>
            <person name="Suzuki O."/>
            <person name="Nakagawa S."/>
            <person name="Senoh A."/>
            <person name="Mizoguchi H."/>
            <person name="Goto Y."/>
            <person name="Shimizu F."/>
            <person name="Wakebe H."/>
            <person name="Hishigaki H."/>
            <person name="Watanabe T."/>
            <person name="Sugiyama A."/>
            <person name="Takemoto M."/>
            <person name="Kawakami B."/>
            <person name="Yamazaki M."/>
            <person name="Watanabe K."/>
            <person name="Kumagai A."/>
            <person name="Itakura S."/>
            <person name="Fukuzumi Y."/>
            <person name="Fujimori Y."/>
            <person name="Komiyama M."/>
            <person name="Tashiro H."/>
            <person name="Tanigami A."/>
            <person name="Fujiwara T."/>
            <person name="Ono T."/>
            <person name="Yamada K."/>
            <person name="Fujii Y."/>
            <person name="Ozaki K."/>
            <person name="Hirao M."/>
            <person name="Ohmori Y."/>
            <person name="Kawabata A."/>
            <person name="Hikiji T."/>
            <person name="Kobatake N."/>
            <person name="Inagaki H."/>
            <person name="Ikema Y."/>
            <person name="Okamoto S."/>
            <person name="Okitani R."/>
            <person name="Kawakami T."/>
            <person name="Noguchi S."/>
            <person name="Itoh T."/>
            <person name="Shigeta K."/>
            <person name="Senba T."/>
            <person name="Matsumura K."/>
            <person name="Nakajima Y."/>
            <person name="Mizuno T."/>
            <person name="Morinaga M."/>
            <person name="Sasaki M."/>
            <person name="Togashi T."/>
            <person name="Oyama M."/>
            <person name="Hata H."/>
            <person name="Watanabe M."/>
            <person name="Komatsu T."/>
            <person name="Mizushima-Sugano J."/>
            <person name="Satoh T."/>
            <person name="Shirai Y."/>
            <person name="Takahashi Y."/>
            <person name="Nakagawa K."/>
            <person name="Okumura K."/>
            <person name="Nagase T."/>
            <person name="Nomura N."/>
            <person name="Kikuchi H."/>
            <person name="Masuho Y."/>
            <person name="Yamashita R."/>
            <person name="Nakai K."/>
            <person name="Yada T."/>
            <person name="Nakamura Y."/>
            <person name="Ohara O."/>
            <person name="Isogai T."/>
            <person name="Sugano S."/>
        </authorList>
    </citation>
    <scope>NUCLEOTIDE SEQUENCE [LARGE SCALE MRNA]</scope>
    <scope>VARIANT ARG-23</scope>
    <source>
        <tissue>Gastric mucosa</tissue>
    </source>
</reference>
<reference key="2">
    <citation type="journal article" date="2006" name="Nature">
        <title>Human chromosome 11 DNA sequence and analysis including novel gene identification.</title>
        <authorList>
            <person name="Taylor T.D."/>
            <person name="Noguchi H."/>
            <person name="Totoki Y."/>
            <person name="Toyoda A."/>
            <person name="Kuroki Y."/>
            <person name="Dewar K."/>
            <person name="Lloyd C."/>
            <person name="Itoh T."/>
            <person name="Takeda T."/>
            <person name="Kim D.-W."/>
            <person name="She X."/>
            <person name="Barlow K.F."/>
            <person name="Bloom T."/>
            <person name="Bruford E."/>
            <person name="Chang J.L."/>
            <person name="Cuomo C.A."/>
            <person name="Eichler E."/>
            <person name="FitzGerald M.G."/>
            <person name="Jaffe D.B."/>
            <person name="LaButti K."/>
            <person name="Nicol R."/>
            <person name="Park H.-S."/>
            <person name="Seaman C."/>
            <person name="Sougnez C."/>
            <person name="Yang X."/>
            <person name="Zimmer A.R."/>
            <person name="Zody M.C."/>
            <person name="Birren B.W."/>
            <person name="Nusbaum C."/>
            <person name="Fujiyama A."/>
            <person name="Hattori M."/>
            <person name="Rogers J."/>
            <person name="Lander E.S."/>
            <person name="Sakaki Y."/>
        </authorList>
    </citation>
    <scope>NUCLEOTIDE SEQUENCE [LARGE SCALE GENOMIC DNA]</scope>
</reference>
<reference key="3">
    <citation type="journal article" date="2004" name="Genome Res.">
        <title>The status, quality, and expansion of the NIH full-length cDNA project: the Mammalian Gene Collection (MGC).</title>
        <authorList>
            <consortium name="The MGC Project Team"/>
        </authorList>
    </citation>
    <scope>NUCLEOTIDE SEQUENCE [LARGE SCALE MRNA]</scope>
    <scope>VARIANT ARG-23</scope>
    <source>
        <tissue>PNS</tissue>
        <tissue>Prostate</tissue>
    </source>
</reference>
<reference key="4">
    <citation type="journal article" date="2014" name="J. Proteomics">
        <title>An enzyme assisted RP-RPLC approach for in-depth analysis of human liver phosphoproteome.</title>
        <authorList>
            <person name="Bian Y."/>
            <person name="Song C."/>
            <person name="Cheng K."/>
            <person name="Dong M."/>
            <person name="Wang F."/>
            <person name="Huang J."/>
            <person name="Sun D."/>
            <person name="Wang L."/>
            <person name="Ye M."/>
            <person name="Zou H."/>
        </authorList>
    </citation>
    <scope>PHOSPHORYLATION [LARGE SCALE ANALYSIS] AT THR-30 AND SER-62</scope>
    <scope>IDENTIFICATION BY MASS SPECTROMETRY [LARGE SCALE ANALYSIS]</scope>
    <source>
        <tissue>Liver</tissue>
    </source>
</reference>
<evidence type="ECO:0000256" key="1">
    <source>
        <dbReference type="SAM" id="MobiDB-lite"/>
    </source>
</evidence>
<evidence type="ECO:0000269" key="2">
    <source>
    </source>
</evidence>
<evidence type="ECO:0000269" key="3">
    <source>
    </source>
</evidence>
<evidence type="ECO:0007744" key="4">
    <source>
    </source>
</evidence>
<name>CK052_HUMAN</name>
<comment type="interaction">
    <interactant intactId="EBI-6660701">
        <id>Q96A22</id>
    </interactant>
    <interactant intactId="EBI-2804848">
        <id>Q96DM3</id>
        <label>RMC1</label>
    </interactant>
    <organismsDiffer>false</organismsDiffer>
    <experiments>3</experiments>
</comment>
<protein>
    <recommendedName>
        <fullName>Uncharacterized protein C11orf52</fullName>
    </recommendedName>
</protein>
<feature type="chain" id="PRO_0000263609" description="Uncharacterized protein C11orf52">
    <location>
        <begin position="1"/>
        <end position="123"/>
    </location>
</feature>
<feature type="region of interest" description="Disordered" evidence="1">
    <location>
        <begin position="17"/>
        <end position="74"/>
    </location>
</feature>
<feature type="compositionally biased region" description="Low complexity" evidence="1">
    <location>
        <begin position="32"/>
        <end position="43"/>
    </location>
</feature>
<feature type="compositionally biased region" description="Basic and acidic residues" evidence="1">
    <location>
        <begin position="44"/>
        <end position="54"/>
    </location>
</feature>
<feature type="modified residue" description="Phosphothreonine" evidence="4">
    <location>
        <position position="30"/>
    </location>
</feature>
<feature type="modified residue" description="Phosphoserine" evidence="4">
    <location>
        <position position="62"/>
    </location>
</feature>
<feature type="sequence variant" id="VAR_029587" description="In dbSNP:rs7124407." evidence="2 3">
    <original>T</original>
    <variation>R</variation>
    <location>
        <position position="23"/>
    </location>
</feature>
<proteinExistence type="evidence at protein level"/>
<keyword id="KW-0597">Phosphoprotein</keyword>
<keyword id="KW-1267">Proteomics identification</keyword>
<keyword id="KW-1185">Reference proteome</keyword>
<dbReference type="EMBL" id="AK057948">
    <property type="protein sequence ID" value="BAB71620.1"/>
    <property type="molecule type" value="mRNA"/>
</dbReference>
<dbReference type="EMBL" id="AP000907">
    <property type="status" value="NOT_ANNOTATED_CDS"/>
    <property type="molecule type" value="Genomic_DNA"/>
</dbReference>
<dbReference type="EMBL" id="BC008501">
    <property type="protein sequence ID" value="AAH08501.1"/>
    <property type="molecule type" value="mRNA"/>
</dbReference>
<dbReference type="EMBL" id="BC110872">
    <property type="protein sequence ID" value="AAI10873.1"/>
    <property type="molecule type" value="mRNA"/>
</dbReference>
<dbReference type="CCDS" id="CCDS8353.1"/>
<dbReference type="RefSeq" id="NP_542390.2">
    <property type="nucleotide sequence ID" value="NM_080659.3"/>
</dbReference>
<dbReference type="BioGRID" id="124891">
    <property type="interactions" value="310"/>
</dbReference>
<dbReference type="FunCoup" id="Q96A22">
    <property type="interactions" value="92"/>
</dbReference>
<dbReference type="IntAct" id="Q96A22">
    <property type="interactions" value="3"/>
</dbReference>
<dbReference type="STRING" id="9606.ENSP00000278601"/>
<dbReference type="iPTMnet" id="Q96A22"/>
<dbReference type="PhosphoSitePlus" id="Q96A22"/>
<dbReference type="SwissPalm" id="Q96A22"/>
<dbReference type="BioMuta" id="C11orf52"/>
<dbReference type="jPOST" id="Q96A22"/>
<dbReference type="MassIVE" id="Q96A22"/>
<dbReference type="PaxDb" id="9606-ENSP00000278601"/>
<dbReference type="PeptideAtlas" id="Q96A22"/>
<dbReference type="ProteomicsDB" id="75893"/>
<dbReference type="Antibodypedia" id="51501">
    <property type="antibodies" value="23 antibodies from 9 providers"/>
</dbReference>
<dbReference type="DNASU" id="91894"/>
<dbReference type="Ensembl" id="ENST00000278601.6">
    <property type="protein sequence ID" value="ENSP00000278601.5"/>
    <property type="gene ID" value="ENSG00000149300.10"/>
</dbReference>
<dbReference type="GeneID" id="91894"/>
<dbReference type="KEGG" id="hsa:91894"/>
<dbReference type="MANE-Select" id="ENST00000278601.6">
    <property type="protein sequence ID" value="ENSP00000278601.5"/>
    <property type="RefSeq nucleotide sequence ID" value="NM_080659.3"/>
    <property type="RefSeq protein sequence ID" value="NP_542390.2"/>
</dbReference>
<dbReference type="UCSC" id="uc058hgo.1">
    <property type="organism name" value="human"/>
</dbReference>
<dbReference type="AGR" id="HGNC:30531"/>
<dbReference type="CTD" id="91894"/>
<dbReference type="GeneCards" id="C11orf52"/>
<dbReference type="HGNC" id="HGNC:30531">
    <property type="gene designation" value="C11orf52"/>
</dbReference>
<dbReference type="HPA" id="ENSG00000149300">
    <property type="expression patterns" value="Low tissue specificity"/>
</dbReference>
<dbReference type="neXtProt" id="NX_Q96A22"/>
<dbReference type="OpenTargets" id="ENSG00000149300"/>
<dbReference type="PharmGKB" id="PA143485347"/>
<dbReference type="VEuPathDB" id="HostDB:ENSG00000149300"/>
<dbReference type="eggNOG" id="ENOG502S7WW">
    <property type="taxonomic scope" value="Eukaryota"/>
</dbReference>
<dbReference type="GeneTree" id="ENSGT00390000015195"/>
<dbReference type="HOGENOM" id="CLU_1980817_0_0_1"/>
<dbReference type="InParanoid" id="Q96A22"/>
<dbReference type="OMA" id="WKCPSPF"/>
<dbReference type="OrthoDB" id="8846498at2759"/>
<dbReference type="PAN-GO" id="Q96A22">
    <property type="GO annotations" value="0 GO annotations based on evolutionary models"/>
</dbReference>
<dbReference type="PhylomeDB" id="Q96A22"/>
<dbReference type="TreeFam" id="TF336887"/>
<dbReference type="PathwayCommons" id="Q96A22"/>
<dbReference type="SignaLink" id="Q96A22"/>
<dbReference type="BioGRID-ORCS" id="91894">
    <property type="hits" value="7 hits in 1114 CRISPR screens"/>
</dbReference>
<dbReference type="GenomeRNAi" id="91894"/>
<dbReference type="Pharos" id="Q96A22">
    <property type="development level" value="Tdark"/>
</dbReference>
<dbReference type="PRO" id="PR:Q96A22"/>
<dbReference type="Proteomes" id="UP000005640">
    <property type="component" value="Chromosome 11"/>
</dbReference>
<dbReference type="RNAct" id="Q96A22">
    <property type="molecule type" value="protein"/>
</dbReference>
<dbReference type="Bgee" id="ENSG00000149300">
    <property type="expression patterns" value="Expressed in adult mammalian kidney and 94 other cell types or tissues"/>
</dbReference>
<dbReference type="ExpressionAtlas" id="Q96A22">
    <property type="expression patterns" value="baseline and differential"/>
</dbReference>
<dbReference type="GO" id="GO:0070062">
    <property type="term" value="C:extracellular exosome"/>
    <property type="evidence" value="ECO:0007005"/>
    <property type="project" value="UniProtKB"/>
</dbReference>
<dbReference type="InterPro" id="IPR028106">
    <property type="entry name" value="DUF4578"/>
</dbReference>
<dbReference type="PANTHER" id="PTHR37342:SF1">
    <property type="entry name" value="CHROMOSOME 11 OPEN READING FRAME 52"/>
    <property type="match status" value="1"/>
</dbReference>
<dbReference type="PANTHER" id="PTHR37342">
    <property type="entry name" value="HYPOTHETICAL PROTEIN LOC689959"/>
    <property type="match status" value="1"/>
</dbReference>
<dbReference type="Pfam" id="PF15147">
    <property type="entry name" value="DUF4578"/>
    <property type="match status" value="1"/>
</dbReference>
<organism>
    <name type="scientific">Homo sapiens</name>
    <name type="common">Human</name>
    <dbReference type="NCBI Taxonomy" id="9606"/>
    <lineage>
        <taxon>Eukaryota</taxon>
        <taxon>Metazoa</taxon>
        <taxon>Chordata</taxon>
        <taxon>Craniata</taxon>
        <taxon>Vertebrata</taxon>
        <taxon>Euteleostomi</taxon>
        <taxon>Mammalia</taxon>
        <taxon>Eutheria</taxon>
        <taxon>Euarchontoglires</taxon>
        <taxon>Primates</taxon>
        <taxon>Haplorrhini</taxon>
        <taxon>Catarrhini</taxon>
        <taxon>Hominidae</taxon>
        <taxon>Homo</taxon>
    </lineage>
</organism>
<accession>Q96A22</accession>
<sequence length="123" mass="13921">MGNRVCCGGSWSCPSTFQKKKKTGSQTRRTLKPQPQQLQQNLPKGHETTGHTYERVLQQQGSQERSPGLMSEDSNLHYADIQVCSRPHAREVKHVHLENATEYATLRFPQATPRYDSKNGTLV</sequence>